<evidence type="ECO:0000255" key="1">
    <source>
        <dbReference type="HAMAP-Rule" id="MF_00433"/>
    </source>
</evidence>
<sequence>MVTIFSYIALLLSALVITLTCYIGLLKIKLI</sequence>
<reference key="1">
    <citation type="journal article" date="1997" name="Proc. Natl. Acad. Sci. U.S.A.">
        <title>Complete nucleotide sequence of the chloroplast genome from the green alga Chlorella vulgaris: the existence of genes possibly involved in chloroplast division.</title>
        <authorList>
            <person name="Wakasugi T."/>
            <person name="Nagai T."/>
            <person name="Kapoor M."/>
            <person name="Sugita M."/>
            <person name="Ito M."/>
            <person name="Ito S."/>
            <person name="Tsudzuki J."/>
            <person name="Nakashima K."/>
            <person name="Tsudzuki T."/>
            <person name="Suzuki Y."/>
            <person name="Hamada A."/>
            <person name="Ohta T."/>
            <person name="Inamura A."/>
            <person name="Yoshinaga K."/>
            <person name="Sugiura M."/>
        </authorList>
    </citation>
    <scope>NUCLEOTIDE SEQUENCE [LARGE SCALE GENOMIC DNA]</scope>
    <source>
        <strain>IAM C-27 / Tamiya</strain>
    </source>
</reference>
<geneLocation type="chloroplast"/>
<keyword id="KW-0150">Chloroplast</keyword>
<keyword id="KW-0249">Electron transport</keyword>
<keyword id="KW-0472">Membrane</keyword>
<keyword id="KW-0602">Photosynthesis</keyword>
<keyword id="KW-0934">Plastid</keyword>
<keyword id="KW-0793">Thylakoid</keyword>
<keyword id="KW-0812">Transmembrane</keyword>
<keyword id="KW-1133">Transmembrane helix</keyword>
<keyword id="KW-0813">Transport</keyword>
<accession>P56306</accession>
<feature type="chain" id="PRO_0000220446" description="Cytochrome b6-f complex subunit 6">
    <location>
        <begin position="1"/>
        <end position="31"/>
    </location>
</feature>
<feature type="transmembrane region" description="Helical" evidence="1">
    <location>
        <begin position="4"/>
        <end position="24"/>
    </location>
</feature>
<proteinExistence type="inferred from homology"/>
<dbReference type="EMBL" id="AB001684">
    <property type="protein sequence ID" value="BAA57985.1"/>
    <property type="molecule type" value="Genomic_DNA"/>
</dbReference>
<dbReference type="PIR" id="T07337">
    <property type="entry name" value="T07337"/>
</dbReference>
<dbReference type="RefSeq" id="NP_045909.1">
    <property type="nucleotide sequence ID" value="NC_001865.1"/>
</dbReference>
<dbReference type="SMR" id="P56306"/>
<dbReference type="GeneID" id="809165"/>
<dbReference type="GO" id="GO:0009535">
    <property type="term" value="C:chloroplast thylakoid membrane"/>
    <property type="evidence" value="ECO:0007669"/>
    <property type="project" value="UniProtKB-SubCell"/>
</dbReference>
<dbReference type="GO" id="GO:0009512">
    <property type="term" value="C:cytochrome b6f complex"/>
    <property type="evidence" value="ECO:0007669"/>
    <property type="project" value="InterPro"/>
</dbReference>
<dbReference type="GO" id="GO:0045158">
    <property type="term" value="F:electron transporter, transferring electrons within cytochrome b6/f complex of photosystem II activity"/>
    <property type="evidence" value="ECO:0007669"/>
    <property type="project" value="UniProtKB-UniRule"/>
</dbReference>
<dbReference type="GO" id="GO:0015979">
    <property type="term" value="P:photosynthesis"/>
    <property type="evidence" value="ECO:0007669"/>
    <property type="project" value="UniProtKB-KW"/>
</dbReference>
<dbReference type="HAMAP" id="MF_00433">
    <property type="entry name" value="Cytb6_f_PetL"/>
    <property type="match status" value="1"/>
</dbReference>
<dbReference type="InterPro" id="IPR007802">
    <property type="entry name" value="Cyt_b6/f_cplx_su6"/>
</dbReference>
<dbReference type="Pfam" id="PF05115">
    <property type="entry name" value="PetL"/>
    <property type="match status" value="1"/>
</dbReference>
<dbReference type="SUPFAM" id="SSF103436">
    <property type="entry name" value="PetL subunit of the cytochrome b6f complex"/>
    <property type="match status" value="1"/>
</dbReference>
<protein>
    <recommendedName>
        <fullName evidence="1">Cytochrome b6-f complex subunit 6</fullName>
    </recommendedName>
    <alternativeName>
        <fullName evidence="1">Cytochrome b6-f complex subunit PetL</fullName>
    </alternativeName>
    <alternativeName>
        <fullName evidence="1">Cytochrome b6-f complex subunit VI</fullName>
    </alternativeName>
</protein>
<name>PETL_CHLVU</name>
<organism>
    <name type="scientific">Chlorella vulgaris</name>
    <name type="common">Green alga</name>
    <dbReference type="NCBI Taxonomy" id="3077"/>
    <lineage>
        <taxon>Eukaryota</taxon>
        <taxon>Viridiplantae</taxon>
        <taxon>Chlorophyta</taxon>
        <taxon>core chlorophytes</taxon>
        <taxon>Trebouxiophyceae</taxon>
        <taxon>Chlorellales</taxon>
        <taxon>Chlorellaceae</taxon>
        <taxon>Chlorella clade</taxon>
        <taxon>Chlorella</taxon>
    </lineage>
</organism>
<comment type="function">
    <text evidence="1">Component of the cytochrome b6-f complex, which mediates electron transfer between photosystem II (PSII) and photosystem I (PSI), cyclic electron flow around PSI, and state transitions. PetL is important for photoautotrophic growth as well as for electron transfer efficiency and stability of the cytochrome b6-f complex.</text>
</comment>
<comment type="subunit">
    <text evidence="1">The 4 large subunits of the cytochrome b6-f complex are cytochrome b6, subunit IV (17 kDa polypeptide, PetD), cytochrome f and the Rieske protein, while the 4 small subunits are PetG, PetL, PetM and PetN. The complex functions as a dimer.</text>
</comment>
<comment type="subcellular location">
    <subcellularLocation>
        <location evidence="1">Plastid</location>
        <location evidence="1">Chloroplast thylakoid membrane</location>
        <topology evidence="1">Single-pass membrane protein</topology>
    </subcellularLocation>
</comment>
<comment type="similarity">
    <text evidence="1">Belongs to the PetL family.</text>
</comment>
<gene>
    <name evidence="1" type="primary">petL</name>
</gene>